<dbReference type="EC" id="2.3.2.27" evidence="1"/>
<dbReference type="EMBL" id="AE016818">
    <property type="protein sequence ID" value="AAS52758.1"/>
    <property type="molecule type" value="Genomic_DNA"/>
</dbReference>
<dbReference type="RefSeq" id="NP_984934.1">
    <property type="nucleotide sequence ID" value="NM_210288.1"/>
</dbReference>
<dbReference type="SMR" id="Q757D9"/>
<dbReference type="FunCoup" id="Q757D9">
    <property type="interactions" value="988"/>
</dbReference>
<dbReference type="STRING" id="284811.Q757D9"/>
<dbReference type="EnsemblFungi" id="AAS52758">
    <property type="protein sequence ID" value="AAS52758"/>
    <property type="gene ID" value="AGOS_AER074W"/>
</dbReference>
<dbReference type="GeneID" id="4621137"/>
<dbReference type="KEGG" id="ago:AGOS_AER074W"/>
<dbReference type="eggNOG" id="KOG0978">
    <property type="taxonomic scope" value="Eukaryota"/>
</dbReference>
<dbReference type="HOGENOM" id="CLU_019713_1_0_1"/>
<dbReference type="InParanoid" id="Q757D9"/>
<dbReference type="OMA" id="ERHRACR"/>
<dbReference type="OrthoDB" id="654191at2759"/>
<dbReference type="UniPathway" id="UPA00143"/>
<dbReference type="Proteomes" id="UP000000591">
    <property type="component" value="Chromosome V"/>
</dbReference>
<dbReference type="GO" id="GO:0000781">
    <property type="term" value="C:chromosome, telomeric region"/>
    <property type="evidence" value="ECO:0007669"/>
    <property type="project" value="GOC"/>
</dbReference>
<dbReference type="GO" id="GO:0033503">
    <property type="term" value="C:HULC complex"/>
    <property type="evidence" value="ECO:0000318"/>
    <property type="project" value="GO_Central"/>
</dbReference>
<dbReference type="GO" id="GO:0005634">
    <property type="term" value="C:nucleus"/>
    <property type="evidence" value="ECO:0000318"/>
    <property type="project" value="GO_Central"/>
</dbReference>
<dbReference type="GO" id="GO:0003688">
    <property type="term" value="F:DNA replication origin binding"/>
    <property type="evidence" value="ECO:0007669"/>
    <property type="project" value="EnsemblFungi"/>
</dbReference>
<dbReference type="GO" id="GO:0042802">
    <property type="term" value="F:identical protein binding"/>
    <property type="evidence" value="ECO:0007669"/>
    <property type="project" value="EnsemblFungi"/>
</dbReference>
<dbReference type="GO" id="GO:0097110">
    <property type="term" value="F:scaffold protein binding"/>
    <property type="evidence" value="ECO:0007669"/>
    <property type="project" value="EnsemblFungi"/>
</dbReference>
<dbReference type="GO" id="GO:0061630">
    <property type="term" value="F:ubiquitin protein ligase activity"/>
    <property type="evidence" value="ECO:0000318"/>
    <property type="project" value="GO_Central"/>
</dbReference>
<dbReference type="GO" id="GO:0008270">
    <property type="term" value="F:zinc ion binding"/>
    <property type="evidence" value="ECO:0007669"/>
    <property type="project" value="UniProtKB-KW"/>
</dbReference>
<dbReference type="GO" id="GO:0000724">
    <property type="term" value="P:double-strand break repair via homologous recombination"/>
    <property type="evidence" value="ECO:0007669"/>
    <property type="project" value="EnsemblFungi"/>
</dbReference>
<dbReference type="GO" id="GO:0042138">
    <property type="term" value="P:meiotic DNA double-strand break formation"/>
    <property type="evidence" value="ECO:0007669"/>
    <property type="project" value="EnsemblFungi"/>
</dbReference>
<dbReference type="GO" id="GO:0031571">
    <property type="term" value="P:mitotic G1 DNA damage checkpoint signaling"/>
    <property type="evidence" value="ECO:0007669"/>
    <property type="project" value="EnsemblFungi"/>
</dbReference>
<dbReference type="GO" id="GO:0031573">
    <property type="term" value="P:mitotic intra-S DNA damage checkpoint signaling"/>
    <property type="evidence" value="ECO:0007669"/>
    <property type="project" value="EnsemblFungi"/>
</dbReference>
<dbReference type="GO" id="GO:0016567">
    <property type="term" value="P:protein ubiquitination"/>
    <property type="evidence" value="ECO:0007669"/>
    <property type="project" value="UniProtKB-UniPathway"/>
</dbReference>
<dbReference type="GO" id="GO:0030174">
    <property type="term" value="P:regulation of DNA-templated DNA replication initiation"/>
    <property type="evidence" value="ECO:0007669"/>
    <property type="project" value="EnsemblFungi"/>
</dbReference>
<dbReference type="GO" id="GO:0031509">
    <property type="term" value="P:subtelomeric heterochromatin formation"/>
    <property type="evidence" value="ECO:0007669"/>
    <property type="project" value="EnsemblFungi"/>
</dbReference>
<dbReference type="GO" id="GO:0000722">
    <property type="term" value="P:telomere maintenance via recombination"/>
    <property type="evidence" value="ECO:0007669"/>
    <property type="project" value="EnsemblFungi"/>
</dbReference>
<dbReference type="GO" id="GO:0006366">
    <property type="term" value="P:transcription by RNA polymerase II"/>
    <property type="evidence" value="ECO:0007669"/>
    <property type="project" value="EnsemblFungi"/>
</dbReference>
<dbReference type="CDD" id="cd16499">
    <property type="entry name" value="RING-HC_Bre1-like"/>
    <property type="match status" value="1"/>
</dbReference>
<dbReference type="FunFam" id="3.30.40.10:FF:000414">
    <property type="entry name" value="E3 ubiquitin protein ligase"/>
    <property type="match status" value="1"/>
</dbReference>
<dbReference type="Gene3D" id="3.30.40.10">
    <property type="entry name" value="Zinc/RING finger domain, C3HC4 (zinc finger)"/>
    <property type="match status" value="1"/>
</dbReference>
<dbReference type="InterPro" id="IPR013956">
    <property type="entry name" value="E3_ubiquit_lig_Bre1"/>
</dbReference>
<dbReference type="InterPro" id="IPR001841">
    <property type="entry name" value="Znf_RING"/>
</dbReference>
<dbReference type="InterPro" id="IPR013083">
    <property type="entry name" value="Znf_RING/FYVE/PHD"/>
</dbReference>
<dbReference type="PANTHER" id="PTHR23163:SF0">
    <property type="entry name" value="E3 UBIQUITIN-PROTEIN LIGASE BRE1"/>
    <property type="match status" value="1"/>
</dbReference>
<dbReference type="PANTHER" id="PTHR23163">
    <property type="entry name" value="RING FINGER PROTEIN-RELATED"/>
    <property type="match status" value="1"/>
</dbReference>
<dbReference type="Pfam" id="PF08647">
    <property type="entry name" value="BRE1"/>
    <property type="match status" value="1"/>
</dbReference>
<dbReference type="Pfam" id="PF13923">
    <property type="entry name" value="zf-C3HC4_2"/>
    <property type="match status" value="1"/>
</dbReference>
<dbReference type="SMART" id="SM00184">
    <property type="entry name" value="RING"/>
    <property type="match status" value="1"/>
</dbReference>
<dbReference type="SUPFAM" id="SSF57850">
    <property type="entry name" value="RING/U-box"/>
    <property type="match status" value="1"/>
</dbReference>
<dbReference type="PROSITE" id="PS50089">
    <property type="entry name" value="ZF_RING_2"/>
    <property type="match status" value="1"/>
</dbReference>
<protein>
    <recommendedName>
        <fullName>E3 ubiquitin-protein ligase BRE1</fullName>
        <ecNumber evidence="1">2.3.2.27</ecNumber>
    </recommendedName>
    <alternativeName>
        <fullName evidence="5">RING-type E3 ubiquitin transferase BRE1</fullName>
    </alternativeName>
</protein>
<keyword id="KW-0156">Chromatin regulator</keyword>
<keyword id="KW-0175">Coiled coil</keyword>
<keyword id="KW-0479">Metal-binding</keyword>
<keyword id="KW-0539">Nucleus</keyword>
<keyword id="KW-1185">Reference proteome</keyword>
<keyword id="KW-0808">Transferase</keyword>
<keyword id="KW-0833">Ubl conjugation pathway</keyword>
<keyword id="KW-0862">Zinc</keyword>
<keyword id="KW-0863">Zinc-finger</keyword>
<feature type="chain" id="PRO_0000055847" description="E3 ubiquitin-protein ligase BRE1">
    <location>
        <begin position="1"/>
        <end position="643"/>
    </location>
</feature>
<feature type="zinc finger region" description="RING-type" evidence="3">
    <location>
        <begin position="591"/>
        <end position="630"/>
    </location>
</feature>
<feature type="region of interest" description="Disordered" evidence="4">
    <location>
        <begin position="173"/>
        <end position="200"/>
    </location>
</feature>
<feature type="region of interest" description="Disordered" evidence="4">
    <location>
        <begin position="246"/>
        <end position="267"/>
    </location>
</feature>
<feature type="coiled-coil region" evidence="2">
    <location>
        <begin position="200"/>
        <end position="233"/>
    </location>
</feature>
<feature type="coiled-coil region" evidence="2">
    <location>
        <begin position="262"/>
        <end position="406"/>
    </location>
</feature>
<feature type="coiled-coil region" evidence="2">
    <location>
        <begin position="446"/>
        <end position="494"/>
    </location>
</feature>
<feature type="coiled-coil region" evidence="2">
    <location>
        <begin position="520"/>
        <end position="555"/>
    </location>
</feature>
<gene>
    <name type="primary">BRE1</name>
    <name type="ordered locus">AER074W</name>
</gene>
<sequence>MEEPAAKRPKLSDRSEPLTQRDVVLFQKEALFRQLNRYRAEARAGQVQVEELRRAHGQVGERLAAVCGVVRSVARAVADARGDGDARALCERVAGGDDDEVVARAAEFAAVVAGGLGRGAAAGEGWHRLEAVNSRLAAENAQLAAELGAVRGFYAELLRRYDRDESETVRRVFKVEESEPPRAATPVEESSAKGAASDGEAATAVVEREMQIEELQTEIRVLEDTVAQLTDWKRLNEQELTKLRQMASSAELSQRHPTPPSSSNLSADLQVLRSKVEKLSHENKELAQLNEAYLGKFQQLSADREIFNNRLSAEFQTAQETLKKHNSNLEKDLVRIRTARDELLSKVAVLEAQKSKSDMLEDLEKMLALQQEQLKALSEHKPEPARDAVMKELQDLEKAFKELSQYSNKKYSEYVNQESLMSKLTVEKTKADQKYFAAMRSKDSILIENKNLSKNLSKSNELIQQLKDIEKSLQAKIENLNKQLHISRINEKRLLDSNKTTSLKIMDLTSQLSKANKSSTLVQQECNKLIEEKAKMESKLNDLEIETKNLATKLTYQENKSKKLHKTLVSNGGDNGALAEELENFRTVVYCSLCSKNWKDTVIKTCGHVFCADCCKERLAARMRKCPTCNKGFSSNDLLVVHL</sequence>
<name>BRE1_EREGS</name>
<reference key="1">
    <citation type="journal article" date="2004" name="Science">
        <title>The Ashbya gossypii genome as a tool for mapping the ancient Saccharomyces cerevisiae genome.</title>
        <authorList>
            <person name="Dietrich F.S."/>
            <person name="Voegeli S."/>
            <person name="Brachat S."/>
            <person name="Lerch A."/>
            <person name="Gates K."/>
            <person name="Steiner S."/>
            <person name="Mohr C."/>
            <person name="Poehlmann R."/>
            <person name="Luedi P."/>
            <person name="Choi S."/>
            <person name="Wing R.A."/>
            <person name="Flavier A."/>
            <person name="Gaffney T.D."/>
            <person name="Philippsen P."/>
        </authorList>
    </citation>
    <scope>NUCLEOTIDE SEQUENCE [LARGE SCALE GENOMIC DNA]</scope>
    <source>
        <strain>ATCC 10895 / CBS 109.51 / FGSC 9923 / NRRL Y-1056</strain>
    </source>
</reference>
<reference key="2">
    <citation type="journal article" date="2013" name="G3 (Bethesda)">
        <title>Genomes of Ashbya fungi isolated from insects reveal four mating-type loci, numerous translocations, lack of transposons, and distinct gene duplications.</title>
        <authorList>
            <person name="Dietrich F.S."/>
            <person name="Voegeli S."/>
            <person name="Kuo S."/>
            <person name="Philippsen P."/>
        </authorList>
    </citation>
    <scope>GENOME REANNOTATION</scope>
    <source>
        <strain>ATCC 10895 / CBS 109.51 / FGSC 9923 / NRRL Y-1056</strain>
    </source>
</reference>
<comment type="function">
    <text evidence="1">E3 ubiquitin-protein ligase that mediates monoubiquitination of histone H2B to form H2BK123ub1. H2BK123ub1 gives a specific tag for epigenetic transcriptional activation and is also a prerequisite for H3K4me and H3K79me formation.</text>
</comment>
<comment type="catalytic activity">
    <reaction evidence="1">
        <text>S-ubiquitinyl-[E2 ubiquitin-conjugating enzyme]-L-cysteine + [acceptor protein]-L-lysine = [E2 ubiquitin-conjugating enzyme]-L-cysteine + N(6)-ubiquitinyl-[acceptor protein]-L-lysine.</text>
        <dbReference type="EC" id="2.3.2.27"/>
    </reaction>
</comment>
<comment type="pathway">
    <text>Protein modification; protein ubiquitination.</text>
</comment>
<comment type="subcellular location">
    <subcellularLocation>
        <location evidence="1">Nucleus</location>
    </subcellularLocation>
</comment>
<comment type="similarity">
    <text evidence="5">Belongs to the BRE1 family.</text>
</comment>
<accession>Q757D9</accession>
<organism>
    <name type="scientific">Eremothecium gossypii (strain ATCC 10895 / CBS 109.51 / FGSC 9923 / NRRL Y-1056)</name>
    <name type="common">Yeast</name>
    <name type="synonym">Ashbya gossypii</name>
    <dbReference type="NCBI Taxonomy" id="284811"/>
    <lineage>
        <taxon>Eukaryota</taxon>
        <taxon>Fungi</taxon>
        <taxon>Dikarya</taxon>
        <taxon>Ascomycota</taxon>
        <taxon>Saccharomycotina</taxon>
        <taxon>Saccharomycetes</taxon>
        <taxon>Saccharomycetales</taxon>
        <taxon>Saccharomycetaceae</taxon>
        <taxon>Eremothecium</taxon>
    </lineage>
</organism>
<proteinExistence type="inferred from homology"/>
<evidence type="ECO:0000250" key="1">
    <source>
        <dbReference type="UniProtKB" id="Q07457"/>
    </source>
</evidence>
<evidence type="ECO:0000255" key="2"/>
<evidence type="ECO:0000255" key="3">
    <source>
        <dbReference type="PROSITE-ProRule" id="PRU00175"/>
    </source>
</evidence>
<evidence type="ECO:0000256" key="4">
    <source>
        <dbReference type="SAM" id="MobiDB-lite"/>
    </source>
</evidence>
<evidence type="ECO:0000305" key="5"/>